<reference key="1">
    <citation type="journal article" date="2000" name="Dev. Biol.">
        <title>Kruppel-homolog, a stage-specific modulator of the prepupal ecdysone response, is essential for Drosophila metamorphosis.</title>
        <authorList>
            <person name="Pecasse F."/>
            <person name="Beck Y."/>
            <person name="Ruiz C."/>
            <person name="Richards G."/>
        </authorList>
    </citation>
    <scope>NUCLEOTIDE SEQUENCE [MRNA] (ISOFORMS ALPHA AND BETA)</scope>
    <scope>FUNCTION</scope>
    <scope>DEVELOPMENTAL STAGE</scope>
    <source>
        <strain>Oregon-R</strain>
        <tissue>Embryo</tissue>
        <tissue>Larva</tissue>
        <tissue>Pupae</tissue>
    </source>
</reference>
<reference key="2">
    <citation type="journal article" date="2000" name="Science">
        <title>The genome sequence of Drosophila melanogaster.</title>
        <authorList>
            <person name="Adams M.D."/>
            <person name="Celniker S.E."/>
            <person name="Holt R.A."/>
            <person name="Evans C.A."/>
            <person name="Gocayne J.D."/>
            <person name="Amanatides P.G."/>
            <person name="Scherer S.E."/>
            <person name="Li P.W."/>
            <person name="Hoskins R.A."/>
            <person name="Galle R.F."/>
            <person name="George R.A."/>
            <person name="Lewis S.E."/>
            <person name="Richards S."/>
            <person name="Ashburner M."/>
            <person name="Henderson S.N."/>
            <person name="Sutton G.G."/>
            <person name="Wortman J.R."/>
            <person name="Yandell M.D."/>
            <person name="Zhang Q."/>
            <person name="Chen L.X."/>
            <person name="Brandon R.C."/>
            <person name="Rogers Y.-H.C."/>
            <person name="Blazej R.G."/>
            <person name="Champe M."/>
            <person name="Pfeiffer B.D."/>
            <person name="Wan K.H."/>
            <person name="Doyle C."/>
            <person name="Baxter E.G."/>
            <person name="Helt G."/>
            <person name="Nelson C.R."/>
            <person name="Miklos G.L.G."/>
            <person name="Abril J.F."/>
            <person name="Agbayani A."/>
            <person name="An H.-J."/>
            <person name="Andrews-Pfannkoch C."/>
            <person name="Baldwin D."/>
            <person name="Ballew R.M."/>
            <person name="Basu A."/>
            <person name="Baxendale J."/>
            <person name="Bayraktaroglu L."/>
            <person name="Beasley E.M."/>
            <person name="Beeson K.Y."/>
            <person name="Benos P.V."/>
            <person name="Berman B.P."/>
            <person name="Bhandari D."/>
            <person name="Bolshakov S."/>
            <person name="Borkova D."/>
            <person name="Botchan M.R."/>
            <person name="Bouck J."/>
            <person name="Brokstein P."/>
            <person name="Brottier P."/>
            <person name="Burtis K.C."/>
            <person name="Busam D.A."/>
            <person name="Butler H."/>
            <person name="Cadieu E."/>
            <person name="Center A."/>
            <person name="Chandra I."/>
            <person name="Cherry J.M."/>
            <person name="Cawley S."/>
            <person name="Dahlke C."/>
            <person name="Davenport L.B."/>
            <person name="Davies P."/>
            <person name="de Pablos B."/>
            <person name="Delcher A."/>
            <person name="Deng Z."/>
            <person name="Mays A.D."/>
            <person name="Dew I."/>
            <person name="Dietz S.M."/>
            <person name="Dodson K."/>
            <person name="Doup L.E."/>
            <person name="Downes M."/>
            <person name="Dugan-Rocha S."/>
            <person name="Dunkov B.C."/>
            <person name="Dunn P."/>
            <person name="Durbin K.J."/>
            <person name="Evangelista C.C."/>
            <person name="Ferraz C."/>
            <person name="Ferriera S."/>
            <person name="Fleischmann W."/>
            <person name="Fosler C."/>
            <person name="Gabrielian A.E."/>
            <person name="Garg N.S."/>
            <person name="Gelbart W.M."/>
            <person name="Glasser K."/>
            <person name="Glodek A."/>
            <person name="Gong F."/>
            <person name="Gorrell J.H."/>
            <person name="Gu Z."/>
            <person name="Guan P."/>
            <person name="Harris M."/>
            <person name="Harris N.L."/>
            <person name="Harvey D.A."/>
            <person name="Heiman T.J."/>
            <person name="Hernandez J.R."/>
            <person name="Houck J."/>
            <person name="Hostin D."/>
            <person name="Houston K.A."/>
            <person name="Howland T.J."/>
            <person name="Wei M.-H."/>
            <person name="Ibegwam C."/>
            <person name="Jalali M."/>
            <person name="Kalush F."/>
            <person name="Karpen G.H."/>
            <person name="Ke Z."/>
            <person name="Kennison J.A."/>
            <person name="Ketchum K.A."/>
            <person name="Kimmel B.E."/>
            <person name="Kodira C.D."/>
            <person name="Kraft C.L."/>
            <person name="Kravitz S."/>
            <person name="Kulp D."/>
            <person name="Lai Z."/>
            <person name="Lasko P."/>
            <person name="Lei Y."/>
            <person name="Levitsky A.A."/>
            <person name="Li J.H."/>
            <person name="Li Z."/>
            <person name="Liang Y."/>
            <person name="Lin X."/>
            <person name="Liu X."/>
            <person name="Mattei B."/>
            <person name="McIntosh T.C."/>
            <person name="McLeod M.P."/>
            <person name="McPherson D."/>
            <person name="Merkulov G."/>
            <person name="Milshina N.V."/>
            <person name="Mobarry C."/>
            <person name="Morris J."/>
            <person name="Moshrefi A."/>
            <person name="Mount S.M."/>
            <person name="Moy M."/>
            <person name="Murphy B."/>
            <person name="Murphy L."/>
            <person name="Muzny D.M."/>
            <person name="Nelson D.L."/>
            <person name="Nelson D.R."/>
            <person name="Nelson K.A."/>
            <person name="Nixon K."/>
            <person name="Nusskern D.R."/>
            <person name="Pacleb J.M."/>
            <person name="Palazzolo M."/>
            <person name="Pittman G.S."/>
            <person name="Pan S."/>
            <person name="Pollard J."/>
            <person name="Puri V."/>
            <person name="Reese M.G."/>
            <person name="Reinert K."/>
            <person name="Remington K."/>
            <person name="Saunders R.D.C."/>
            <person name="Scheeler F."/>
            <person name="Shen H."/>
            <person name="Shue B.C."/>
            <person name="Siden-Kiamos I."/>
            <person name="Simpson M."/>
            <person name="Skupski M.P."/>
            <person name="Smith T.J."/>
            <person name="Spier E."/>
            <person name="Spradling A.C."/>
            <person name="Stapleton M."/>
            <person name="Strong R."/>
            <person name="Sun E."/>
            <person name="Svirskas R."/>
            <person name="Tector C."/>
            <person name="Turner R."/>
            <person name="Venter E."/>
            <person name="Wang A.H."/>
            <person name="Wang X."/>
            <person name="Wang Z.-Y."/>
            <person name="Wassarman D.A."/>
            <person name="Weinstock G.M."/>
            <person name="Weissenbach J."/>
            <person name="Williams S.M."/>
            <person name="Woodage T."/>
            <person name="Worley K.C."/>
            <person name="Wu D."/>
            <person name="Yang S."/>
            <person name="Yao Q.A."/>
            <person name="Ye J."/>
            <person name="Yeh R.-F."/>
            <person name="Zaveri J.S."/>
            <person name="Zhan M."/>
            <person name="Zhang G."/>
            <person name="Zhao Q."/>
            <person name="Zheng L."/>
            <person name="Zheng X.H."/>
            <person name="Zhong F.N."/>
            <person name="Zhong W."/>
            <person name="Zhou X."/>
            <person name="Zhu S.C."/>
            <person name="Zhu X."/>
            <person name="Smith H.O."/>
            <person name="Gibbs R.A."/>
            <person name="Myers E.W."/>
            <person name="Rubin G.M."/>
            <person name="Venter J.C."/>
        </authorList>
    </citation>
    <scope>NUCLEOTIDE SEQUENCE [LARGE SCALE GENOMIC DNA]</scope>
    <source>
        <strain>Berkeley</strain>
    </source>
</reference>
<reference key="3">
    <citation type="journal article" date="2002" name="Genome Biol.">
        <title>Annotation of the Drosophila melanogaster euchromatic genome: a systematic review.</title>
        <authorList>
            <person name="Misra S."/>
            <person name="Crosby M.A."/>
            <person name="Mungall C.J."/>
            <person name="Matthews B.B."/>
            <person name="Campbell K.S."/>
            <person name="Hradecky P."/>
            <person name="Huang Y."/>
            <person name="Kaminker J.S."/>
            <person name="Millburn G.H."/>
            <person name="Prochnik S.E."/>
            <person name="Smith C.D."/>
            <person name="Tupy J.L."/>
            <person name="Whitfield E.J."/>
            <person name="Bayraktaroglu L."/>
            <person name="Berman B.P."/>
            <person name="Bettencourt B.R."/>
            <person name="Celniker S.E."/>
            <person name="de Grey A.D.N.J."/>
            <person name="Drysdale R.A."/>
            <person name="Harris N.L."/>
            <person name="Richter J."/>
            <person name="Russo S."/>
            <person name="Schroeder A.J."/>
            <person name="Shu S.Q."/>
            <person name="Stapleton M."/>
            <person name="Yamada C."/>
            <person name="Ashburner M."/>
            <person name="Gelbart W.M."/>
            <person name="Rubin G.M."/>
            <person name="Lewis S.E."/>
        </authorList>
    </citation>
    <scope>GENOME REANNOTATION</scope>
    <scope>ALTERNATIVE SPLICING</scope>
    <source>
        <strain>Berkeley</strain>
    </source>
</reference>
<reference key="4">
    <citation type="journal article" date="2002" name="Genome Biol.">
        <title>A Drosophila full-length cDNA resource.</title>
        <authorList>
            <person name="Stapleton M."/>
            <person name="Carlson J.W."/>
            <person name="Brokstein P."/>
            <person name="Yu C."/>
            <person name="Champe M."/>
            <person name="George R.A."/>
            <person name="Guarin H."/>
            <person name="Kronmiller B."/>
            <person name="Pacleb J.M."/>
            <person name="Park S."/>
            <person name="Wan K.H."/>
            <person name="Rubin G.M."/>
            <person name="Celniker S.E."/>
        </authorList>
    </citation>
    <scope>NUCLEOTIDE SEQUENCE [LARGE SCALE MRNA] (ISOFORM BETA)</scope>
    <source>
        <strain>Berkeley</strain>
        <tissue>Embryo</tissue>
    </source>
</reference>
<reference key="5">
    <citation type="journal article" date="1986" name="Cell">
        <title>A conserved family of nuclear proteins containing structural elements of the finger protein encoded by Kruppel, a Drosophila segmentation gene.</title>
        <authorList>
            <person name="Schuh R."/>
            <person name="Aicher W."/>
            <person name="Gaul U."/>
            <person name="Cote S."/>
            <person name="Preiss A."/>
            <person name="Maier D."/>
            <person name="Seifert E."/>
            <person name="Nauber U."/>
            <person name="Schroeder C."/>
            <person name="Kemler R."/>
            <person name="Jaeckle H."/>
        </authorList>
    </citation>
    <scope>NUCLEOTIDE SEQUENCE [MRNA] OF 289-367</scope>
</reference>
<dbReference type="EMBL" id="AJ005440">
    <property type="protein sequence ID" value="CAA06543.2"/>
    <property type="molecule type" value="mRNA"/>
</dbReference>
<dbReference type="EMBL" id="AJ005441">
    <property type="protein sequence ID" value="CAA06544.2"/>
    <property type="molecule type" value="mRNA"/>
</dbReference>
<dbReference type="EMBL" id="AE014134">
    <property type="protein sequence ID" value="AAF52343.2"/>
    <property type="molecule type" value="Genomic_DNA"/>
</dbReference>
<dbReference type="EMBL" id="AE014134">
    <property type="protein sequence ID" value="AAG22417.1"/>
    <property type="molecule type" value="Genomic_DNA"/>
</dbReference>
<dbReference type="EMBL" id="AY051816">
    <property type="protein sequence ID" value="AAK93240.1"/>
    <property type="molecule type" value="mRNA"/>
</dbReference>
<dbReference type="EMBL" id="M14940">
    <property type="protein sequence ID" value="AAA28660.1"/>
    <property type="molecule type" value="mRNA"/>
</dbReference>
<dbReference type="RefSeq" id="NP_477466.1">
    <molecule id="P08155-1"/>
    <property type="nucleotide sequence ID" value="NM_058118.5"/>
</dbReference>
<dbReference type="RefSeq" id="NP_477467.1">
    <molecule id="P08155-2"/>
    <property type="nucleotide sequence ID" value="NM_058119.5"/>
</dbReference>
<dbReference type="SMR" id="P08155"/>
<dbReference type="BioGRID" id="60025">
    <property type="interactions" value="13"/>
</dbReference>
<dbReference type="FunCoup" id="P08155">
    <property type="interactions" value="301"/>
</dbReference>
<dbReference type="IntAct" id="P08155">
    <property type="interactions" value="11"/>
</dbReference>
<dbReference type="STRING" id="7227.FBpp0310810"/>
<dbReference type="PaxDb" id="7227-FBpp0288736"/>
<dbReference type="EnsemblMetazoa" id="FBtr0344437">
    <molecule id="P08155-2"/>
    <property type="protein sequence ID" value="FBpp0310809"/>
    <property type="gene ID" value="FBgn0266450"/>
</dbReference>
<dbReference type="EnsemblMetazoa" id="FBtr0344438">
    <molecule id="P08155-1"/>
    <property type="protein sequence ID" value="FBpp0310810"/>
    <property type="gene ID" value="FBgn0266450"/>
</dbReference>
<dbReference type="GeneID" id="33861"/>
<dbReference type="KEGG" id="dme:Dmel_CG45074"/>
<dbReference type="AGR" id="FB:FBgn0266450"/>
<dbReference type="CTD" id="33861"/>
<dbReference type="FlyBase" id="FBgn0266450">
    <property type="gene designation" value="Kr-h1"/>
</dbReference>
<dbReference type="VEuPathDB" id="VectorBase:FBgn0266450"/>
<dbReference type="eggNOG" id="KOG1721">
    <property type="taxonomic scope" value="Eukaryota"/>
</dbReference>
<dbReference type="HOGENOM" id="CLU_014679_0_1_1"/>
<dbReference type="InParanoid" id="P08155"/>
<dbReference type="OMA" id="WAPKQIW"/>
<dbReference type="OrthoDB" id="6591996at2759"/>
<dbReference type="PhylomeDB" id="P08155"/>
<dbReference type="BioGRID-ORCS" id="33861">
    <property type="hits" value="0 hits in 1 CRISPR screen"/>
</dbReference>
<dbReference type="ChiTaRS" id="Kr-h1">
    <property type="organism name" value="fly"/>
</dbReference>
<dbReference type="GenomeRNAi" id="33861"/>
<dbReference type="PRO" id="PR:P08155"/>
<dbReference type="Proteomes" id="UP000000803">
    <property type="component" value="Chromosome 2L"/>
</dbReference>
<dbReference type="Bgee" id="FBgn0266450">
    <property type="expression patterns" value="Expressed in adult Malpighian tubule principal cell of initial segment in Malpighian tubule and 263 other cell types or tissues"/>
</dbReference>
<dbReference type="GO" id="GO:0005829">
    <property type="term" value="C:cytosol"/>
    <property type="evidence" value="ECO:0000314"/>
    <property type="project" value="FlyBase"/>
</dbReference>
<dbReference type="GO" id="GO:0005634">
    <property type="term" value="C:nucleus"/>
    <property type="evidence" value="ECO:0000314"/>
    <property type="project" value="FlyBase"/>
</dbReference>
<dbReference type="GO" id="GO:0003700">
    <property type="term" value="F:DNA-binding transcription factor activity"/>
    <property type="evidence" value="ECO:0000250"/>
    <property type="project" value="FlyBase"/>
</dbReference>
<dbReference type="GO" id="GO:0000978">
    <property type="term" value="F:RNA polymerase II cis-regulatory region sequence-specific DNA binding"/>
    <property type="evidence" value="ECO:0000318"/>
    <property type="project" value="GO_Central"/>
</dbReference>
<dbReference type="GO" id="GO:0008270">
    <property type="term" value="F:zinc ion binding"/>
    <property type="evidence" value="ECO:0007669"/>
    <property type="project" value="UniProtKB-KW"/>
</dbReference>
<dbReference type="GO" id="GO:0007552">
    <property type="term" value="P:metamorphosis"/>
    <property type="evidence" value="ECO:0000315"/>
    <property type="project" value="FlyBase"/>
</dbReference>
<dbReference type="GO" id="GO:0045316">
    <property type="term" value="P:negative regulation of compound eye photoreceptor development"/>
    <property type="evidence" value="ECO:0000315"/>
    <property type="project" value="FlyBase"/>
</dbReference>
<dbReference type="GO" id="GO:0010977">
    <property type="term" value="P:negative regulation of neuron projection development"/>
    <property type="evidence" value="ECO:0000316"/>
    <property type="project" value="FlyBase"/>
</dbReference>
<dbReference type="GO" id="GO:0006355">
    <property type="term" value="P:regulation of DNA-templated transcription"/>
    <property type="evidence" value="ECO:0000250"/>
    <property type="project" value="FlyBase"/>
</dbReference>
<dbReference type="GO" id="GO:0006357">
    <property type="term" value="P:regulation of transcription by RNA polymerase II"/>
    <property type="evidence" value="ECO:0000318"/>
    <property type="project" value="GO_Central"/>
</dbReference>
<dbReference type="GO" id="GO:0035075">
    <property type="term" value="P:response to ecdysone"/>
    <property type="evidence" value="ECO:0000315"/>
    <property type="project" value="FlyBase"/>
</dbReference>
<dbReference type="GO" id="GO:0042594">
    <property type="term" value="P:response to starvation"/>
    <property type="evidence" value="ECO:0000314"/>
    <property type="project" value="FlyBase"/>
</dbReference>
<dbReference type="FunFam" id="3.30.160.60:FF:001855">
    <property type="entry name" value="Uncharacterized protein, isoform B"/>
    <property type="match status" value="1"/>
</dbReference>
<dbReference type="FunFam" id="3.30.160.60:FF:000446">
    <property type="entry name" value="Zinc finger protein"/>
    <property type="match status" value="1"/>
</dbReference>
<dbReference type="FunFam" id="3.30.160.60:FF:001399">
    <property type="entry name" value="Zinc finger protein"/>
    <property type="match status" value="1"/>
</dbReference>
<dbReference type="FunFam" id="3.30.160.60:FF:000072">
    <property type="entry name" value="zinc finger protein 143 isoform X1"/>
    <property type="match status" value="1"/>
</dbReference>
<dbReference type="FunFam" id="3.30.160.60:FF:000624">
    <property type="entry name" value="zinc finger protein 697"/>
    <property type="match status" value="1"/>
</dbReference>
<dbReference type="Gene3D" id="3.30.160.60">
    <property type="entry name" value="Classic Zinc Finger"/>
    <property type="match status" value="6"/>
</dbReference>
<dbReference type="InterPro" id="IPR036236">
    <property type="entry name" value="Znf_C2H2_sf"/>
</dbReference>
<dbReference type="InterPro" id="IPR013087">
    <property type="entry name" value="Znf_C2H2_type"/>
</dbReference>
<dbReference type="PANTHER" id="PTHR23226">
    <property type="entry name" value="ZINC FINGER AND SCAN DOMAIN-CONTAINING"/>
    <property type="match status" value="1"/>
</dbReference>
<dbReference type="PANTHER" id="PTHR23226:SF371">
    <property type="entry name" value="ZINC FINGER PROTEIN 112-LIKE PROTEIN"/>
    <property type="match status" value="1"/>
</dbReference>
<dbReference type="Pfam" id="PF00096">
    <property type="entry name" value="zf-C2H2"/>
    <property type="match status" value="6"/>
</dbReference>
<dbReference type="SMART" id="SM00355">
    <property type="entry name" value="ZnF_C2H2"/>
    <property type="match status" value="8"/>
</dbReference>
<dbReference type="SUPFAM" id="SSF57667">
    <property type="entry name" value="beta-beta-alpha zinc fingers"/>
    <property type="match status" value="4"/>
</dbReference>
<dbReference type="PROSITE" id="PS00028">
    <property type="entry name" value="ZINC_FINGER_C2H2_1"/>
    <property type="match status" value="8"/>
</dbReference>
<dbReference type="PROSITE" id="PS50157">
    <property type="entry name" value="ZINC_FINGER_C2H2_2"/>
    <property type="match status" value="8"/>
</dbReference>
<sequence length="845" mass="91452">MTESKNDTKSWAPKQIWIKDVLKKSGTELLDISKSPAKAVAVKKSPAKDSATTKMVYYSANQLLIKTEQSSQAQFCLQVPPPLTATTTSVGLGVPPSGGQQEHFELLQTPQQRQMQLQLQDQHQQEQQQFVSYQLAIQQHQKQQQQQQHESITNAAPTAAPSAQRIKTEPVGGFPASAAVVSQVRKPSASKPQFKCDQCGMTFGSKSAHTSHTKSHSKNQDLSLNGASGAGVAAPVSTAAIELNDAGLPVGIPKSPTIKPLANVAAGADPYQCNVCQKTFAVPARLIRHYRTHTGERPFECEFCHKLFSVKENLQVHRRIHTKERPYKCDVCGRAFEHSGKLHRHMRIHTGERPHKCSVCEKTFIQSGQLVIHMRTHTGEKPYKCPEPGCGKGFTCSKQLKVHSRTHTGEKPYHCDICFRDFGYNHVLKLHRVQHYGSKCYKCTICDETFKNKKEMEAHIKGHANEVPDDEAEAAAASAAASTSAGSSAGSPSLQGVSSNSESSNHSPPSSPPATKKPRQARQPRVSKTVAATLSIPTSSPLSPSSLSSTYSPSASSMASPPPTSAHYLPVQMEADALSRDSGVSSAQPAHSTYADEEPTDLSMQQVQGQLPESTVDYYQAPPSLLELQPQPAGLTINPALLEAASIARRHDDNDDQVQDEDVHAAAWQMMQLCRGHGSLPPTEQPAPSHQPQVPTLHVSDLAANYDDTHEATVLIEHFKRGDLARHGLHKGYAPVPKYESALPNPDVVRRVEAAIGLRSSTESPERSSSPESDSLMMADRNVMTLPLRKRKHYMNKGDDGQVDSEKASGDGTSAAGGAASVGAGDGPGSKVMRMSSVIQFAKAS</sequence>
<name>KRH1_DROME</name>
<keyword id="KW-0025">Alternative splicing</keyword>
<keyword id="KW-0217">Developmental protein</keyword>
<keyword id="KW-0238">DNA-binding</keyword>
<keyword id="KW-0479">Metal-binding</keyword>
<keyword id="KW-1185">Reference proteome</keyword>
<keyword id="KW-0677">Repeat</keyword>
<keyword id="KW-0862">Zinc</keyword>
<keyword id="KW-0863">Zinc-finger</keyword>
<protein>
    <recommendedName>
        <fullName>Krueppel homolog 1</fullName>
    </recommendedName>
    <alternativeName>
        <fullName>Krueppel homologous protein 1</fullName>
    </alternativeName>
</protein>
<gene>
    <name type="primary">Kr-h1</name>
    <name type="synonym">Kr-h</name>
    <name type="ORF">CG9167</name>
</gene>
<evidence type="ECO:0000255" key="1">
    <source>
        <dbReference type="PROSITE-ProRule" id="PRU00042"/>
    </source>
</evidence>
<evidence type="ECO:0000256" key="2">
    <source>
        <dbReference type="SAM" id="MobiDB-lite"/>
    </source>
</evidence>
<evidence type="ECO:0000269" key="3">
    <source>
    </source>
</evidence>
<evidence type="ECO:0000303" key="4">
    <source>
    </source>
</evidence>
<evidence type="ECO:0000305" key="5"/>
<feature type="chain" id="PRO_0000046991" description="Krueppel homolog 1">
    <location>
        <begin position="1"/>
        <end position="845"/>
    </location>
</feature>
<feature type="zinc finger region" description="C2H2-type 1" evidence="1">
    <location>
        <begin position="194"/>
        <end position="216"/>
    </location>
</feature>
<feature type="zinc finger region" description="C2H2-type 2" evidence="1">
    <location>
        <begin position="271"/>
        <end position="293"/>
    </location>
</feature>
<feature type="zinc finger region" description="C2H2-type 3" evidence="1">
    <location>
        <begin position="299"/>
        <end position="321"/>
    </location>
</feature>
<feature type="zinc finger region" description="C2H2-type 4" evidence="1">
    <location>
        <begin position="327"/>
        <end position="349"/>
    </location>
</feature>
<feature type="zinc finger region" description="C2H2-type 5" evidence="1">
    <location>
        <begin position="355"/>
        <end position="377"/>
    </location>
</feature>
<feature type="zinc finger region" description="C2H2-type 6" evidence="1">
    <location>
        <begin position="383"/>
        <end position="407"/>
    </location>
</feature>
<feature type="zinc finger region" description="C2H2-type 7" evidence="1">
    <location>
        <begin position="413"/>
        <end position="435"/>
    </location>
</feature>
<feature type="zinc finger region" description="C2H2-type 8" evidence="1">
    <location>
        <begin position="441"/>
        <end position="463"/>
    </location>
</feature>
<feature type="region of interest" description="Disordered" evidence="2">
    <location>
        <begin position="141"/>
        <end position="164"/>
    </location>
</feature>
<feature type="region of interest" description="Disordered" evidence="2">
    <location>
        <begin position="469"/>
        <end position="610"/>
    </location>
</feature>
<feature type="region of interest" description="Disordered" evidence="2">
    <location>
        <begin position="757"/>
        <end position="845"/>
    </location>
</feature>
<feature type="compositionally biased region" description="Low complexity" evidence="2">
    <location>
        <begin position="474"/>
        <end position="491"/>
    </location>
</feature>
<feature type="compositionally biased region" description="Low complexity" evidence="2">
    <location>
        <begin position="498"/>
        <end position="508"/>
    </location>
</feature>
<feature type="compositionally biased region" description="Low complexity" evidence="2">
    <location>
        <begin position="532"/>
        <end position="559"/>
    </location>
</feature>
<feature type="compositionally biased region" description="Polar residues" evidence="2">
    <location>
        <begin position="582"/>
        <end position="591"/>
    </location>
</feature>
<feature type="compositionally biased region" description="Low complexity" evidence="2">
    <location>
        <begin position="759"/>
        <end position="775"/>
    </location>
</feature>
<feature type="compositionally biased region" description="Basic and acidic residues" evidence="2">
    <location>
        <begin position="796"/>
        <end position="809"/>
    </location>
</feature>
<feature type="compositionally biased region" description="Low complexity" evidence="2">
    <location>
        <begin position="810"/>
        <end position="823"/>
    </location>
</feature>
<feature type="splice variant" id="VSP_006830" description="In isoform Alpha." evidence="4">
    <location>
        <begin position="1"/>
        <end position="54"/>
    </location>
</feature>
<feature type="sequence conflict" description="In Ref. 5; AAA28660." evidence="5" ref="5">
    <original>N</original>
    <variation>D</variation>
    <location>
        <position position="313"/>
    </location>
</feature>
<comment type="function">
    <text evidence="3">Plays a general role in the hierarchies of gene expression leading to metamorphosis.</text>
</comment>
<comment type="alternative products">
    <event type="alternative splicing"/>
    <isoform>
        <id>P08155-1</id>
        <name>Beta</name>
        <sequence type="displayed"/>
    </isoform>
    <isoform>
        <id>P08155-2</id>
        <name>Alpha</name>
        <sequence type="described" ref="VSP_006830"/>
    </isoform>
</comment>
<comment type="developmental stage">
    <text evidence="3">Beta isoform is expressed during embryogenesis, most abundant in midembryogenesis, and in adults. Alpha isoform is expressed from embryogenesis to 8 hours after pupariation, major period of expression is during second instar.</text>
</comment>
<comment type="similarity">
    <text evidence="5">Belongs to the krueppel C2H2-type zinc-finger protein family.</text>
</comment>
<proteinExistence type="evidence at transcript level"/>
<accession>P08155</accession>
<accession>Q9VMH5</accession>
<organism>
    <name type="scientific">Drosophila melanogaster</name>
    <name type="common">Fruit fly</name>
    <dbReference type="NCBI Taxonomy" id="7227"/>
    <lineage>
        <taxon>Eukaryota</taxon>
        <taxon>Metazoa</taxon>
        <taxon>Ecdysozoa</taxon>
        <taxon>Arthropoda</taxon>
        <taxon>Hexapoda</taxon>
        <taxon>Insecta</taxon>
        <taxon>Pterygota</taxon>
        <taxon>Neoptera</taxon>
        <taxon>Endopterygota</taxon>
        <taxon>Diptera</taxon>
        <taxon>Brachycera</taxon>
        <taxon>Muscomorpha</taxon>
        <taxon>Ephydroidea</taxon>
        <taxon>Drosophilidae</taxon>
        <taxon>Drosophila</taxon>
        <taxon>Sophophora</taxon>
    </lineage>
</organism>